<feature type="signal peptide" evidence="5">
    <location>
        <begin position="1"/>
        <end position="34"/>
    </location>
</feature>
<feature type="chain" id="PRO_0000032615" description="Cell surface glycoprotein">
    <location>
        <begin position="35"/>
        <end status="unknown"/>
    </location>
</feature>
<feature type="propeptide" id="PRO_0000444189" description="Removed by archaeosortase" evidence="1">
    <location>
        <begin status="unknown"/>
        <end position="862"/>
    </location>
</feature>
<feature type="transmembrane region" description="Helical" evidence="2">
    <location>
        <begin position="838"/>
        <end position="858"/>
    </location>
</feature>
<feature type="region of interest" description="Disordered" evidence="4">
    <location>
        <begin position="35"/>
        <end position="60"/>
    </location>
</feature>
<feature type="region of interest" description="Disordered" evidence="4">
    <location>
        <begin position="101"/>
        <end position="126"/>
    </location>
</feature>
<feature type="region of interest" description="Disordered" evidence="4">
    <location>
        <begin position="200"/>
        <end position="220"/>
    </location>
</feature>
<feature type="region of interest" description="Disordered" evidence="4">
    <location>
        <begin position="752"/>
        <end position="838"/>
    </location>
</feature>
<feature type="short sequence motif" description="PGF sorting signal" evidence="1">
    <location>
        <begin position="839"/>
        <end position="841"/>
    </location>
</feature>
<feature type="compositionally biased region" description="Polar residues" evidence="4">
    <location>
        <begin position="43"/>
        <end position="57"/>
    </location>
</feature>
<feature type="compositionally biased region" description="Basic and acidic residues" evidence="4">
    <location>
        <begin position="206"/>
        <end position="220"/>
    </location>
</feature>
<feature type="compositionally biased region" description="Acidic residues" evidence="4">
    <location>
        <begin position="784"/>
        <end position="801"/>
    </location>
</feature>
<feature type="compositionally biased region" description="Low complexity" evidence="4">
    <location>
        <begin position="802"/>
        <end position="815"/>
    </location>
</feature>
<feature type="compositionally biased region" description="Acidic residues" evidence="4">
    <location>
        <begin position="816"/>
        <end position="833"/>
    </location>
</feature>
<feature type="glycosylation site" description="N-linked (GlcNAc...) asparagine" evidence="3">
    <location>
        <position position="442"/>
    </location>
</feature>
<feature type="glycosylation site" description="N-linked (GlcNAc...) asparagine" evidence="3">
    <location>
        <position position="520"/>
    </location>
</feature>
<feature type="glycosylation site" description="N-linked (GlcNAc...) asparagine" evidence="3">
    <location>
        <position position="550"/>
    </location>
</feature>
<feature type="glycosylation site" description="N-linked (GlcNAc...) asparagine" evidence="3">
    <location>
        <position position="702"/>
    </location>
</feature>
<feature type="glycosylation site" description="N-linked (GlcNAc...) asparagine" evidence="3">
    <location>
        <position position="761"/>
    </location>
</feature>
<feature type="sequence conflict" description="In Ref. 1; BAB39352." ref="1">
    <original>V</original>
    <variation>A</variation>
    <location>
        <position position="369"/>
    </location>
</feature>
<feature type="sequence conflict" description="In Ref. 1; BAB39352." ref="1">
    <original>T</original>
    <variation>I</variation>
    <location>
        <position position="691"/>
    </location>
</feature>
<sequence>MTDTQQKIKAVLLTVLMVTSVFAATIAFSGAAAASERGAGDSYTTGPTDGNQDNVDSAGNVGAGAVVFQGEDDIEGEFADGNGDTVGIGELQKVSGDNEGILLESPIPQDQPTGRYTANPGVEGTEGVTLQTPRITDLEIQNSDEGDVTGSILQANNDNTAEILVDYNYDEAEDLELTVEDEDGLEVTEEILADGASETVNTNVNNDDHPNPAADGDRDDSFDAGFTINPSNVDEGEYTITVEGVEDLDFGDASETATVEITTDQTASLSLDSDEVTQGEDLGFDIENSPEGNFHAVVIEESEFRDSASASNYAKVFRNVGDTSDRGLVGEDADGNTVAVAPGDADSLESIDYAYGIVEIDGGTGVGSVETQYLDDSSIDIDLYEAANGDYTDNNAHVNDINLVTDDTYETDDEQDFDVLEGDLTIDSPSGTYVTGSEVDVNGTASEGIDDVAIYARDNNDYELVEIDSEETISVDGDDTFSEEDISLSGGDLGGNDILGLPGTYRIGVVDVEDADSNSNGTVDDSLTTSEFNSGVSSAESLRVTDTELNGTFITYNGQISSDDNQIDVEGQAPGKDNLVIAFVDSRGNAVATDISVDDDDTFSEDDISISALSEGTVTAHIISSGRDNLFGDGVSDSSSGFASLIEEEYASGSSTGDQVRSRILENSVDDTASDDLIVNEQFRLADGLTTVESVNSPVEANGTIEIEGTTNRKPDDNTITVELLDDEDESVTVDSTDEWSSDGQWSVSLDLSDENVEPGNFTVEADDGDNTDRQSVQIVEAGSLEEEQPATDTPEPDTDTPEPATDTPEPATDTPEPDTDTPEPDTETEEATTEATGPGFTAAIALIALVAAALLAVRRDN</sequence>
<organism>
    <name type="scientific">Haloarcula japonica (strain ATCC 49778 / DSM 6131 / JCM 7785 / NBRC 101032 / NCIMB 13157 / TR-1)</name>
    <dbReference type="NCBI Taxonomy" id="1227453"/>
    <lineage>
        <taxon>Archaea</taxon>
        <taxon>Methanobacteriati</taxon>
        <taxon>Methanobacteriota</taxon>
        <taxon>Stenosarchaea group</taxon>
        <taxon>Halobacteria</taxon>
        <taxon>Halobacteriales</taxon>
        <taxon>Haloarculaceae</taxon>
        <taxon>Haloarcula</taxon>
    </lineage>
</organism>
<proteinExistence type="evidence at protein level"/>
<reference key="1">
    <citation type="journal article" date="1997" name="Extremophiles">
        <title>Cloning and sequencing of the gene encoding the cell surface glycoprotein of Haloarcula japonica strain TR-1.</title>
        <authorList>
            <person name="Wakai H."/>
            <person name="Nakamura S."/>
            <person name="Kawasaki H."/>
            <person name="Takada K."/>
            <person name="Mizutani S."/>
            <person name="Aono R."/>
            <person name="Horikoshi K."/>
        </authorList>
    </citation>
    <scope>NUCLEOTIDE SEQUENCE [GENOMIC DNA]</scope>
    <scope>FUNCTION</scope>
    <scope>SUBCELLULAR LOCATION</scope>
    <source>
        <strain>ATCC 49778 / DSM 6131 / JCM 7785 / NBRC 101032 / NCIMB 13157 / TR-1</strain>
    </source>
</reference>
<reference key="2">
    <citation type="journal article" date="2014" name="PLoS Genet.">
        <title>Phylogenetically driven sequencing of extremely halophilic archaea reveals strategies for static and dynamic osmo-response.</title>
        <authorList>
            <person name="Becker E.A."/>
            <person name="Seitzer P.M."/>
            <person name="Tritt A."/>
            <person name="Larsen D."/>
            <person name="Krusor M."/>
            <person name="Yao A.I."/>
            <person name="Wu D."/>
            <person name="Madern D."/>
            <person name="Eisen J.A."/>
            <person name="Darling A.E."/>
            <person name="Facciotti M.T."/>
        </authorList>
    </citation>
    <scope>NUCLEOTIDE SEQUENCE [LARGE SCALE GENOMIC DNA]</scope>
    <source>
        <strain>ATCC 49778 / DSM 6131 / JCM 7785 / NBRC 101032 / NCIMB 13157 / TR-1</strain>
    </source>
</reference>
<reference evidence="7" key="3">
    <citation type="journal article" date="1995" name="Biotechnol. Lett.">
        <title>Purification and partial characterization of cell surface glycoprotein from extremely halophilic archaeon Haloarcula japonica strain TR-1.</title>
        <authorList>
            <person name="Nakamura S."/>
            <person name="Mizutani S."/>
            <person name="Wakai H."/>
            <person name="Kawasaki H."/>
            <person name="Aono R."/>
            <person name="Horikoshi K."/>
        </authorList>
    </citation>
    <scope>PROTEIN SEQUENCE OF 35-52</scope>
    <scope>FUNCTION</scope>
    <scope>SUBCELLULAR LOCATION</scope>
    <scope>GLYCOSYLATION</scope>
    <source>
        <strain>ATCC 49778 / DSM 6131 / JCM 7785 / NBRC 101032 / NCIMB 13157 / TR-1</strain>
    </source>
</reference>
<gene>
    <name evidence="6" type="primary">csg</name>
    <name evidence="10" type="ORF">C444_08390</name>
</gene>
<dbReference type="EMBL" id="D87290">
    <property type="protein sequence ID" value="BAB39352.1"/>
    <property type="molecule type" value="Genomic_DNA"/>
</dbReference>
<dbReference type="EMBL" id="AOLY01000022">
    <property type="protein sequence ID" value="EMA31256.1"/>
    <property type="status" value="ALT_INIT"/>
    <property type="molecule type" value="Genomic_DNA"/>
</dbReference>
<dbReference type="RefSeq" id="WP_049909326.1">
    <property type="nucleotide sequence ID" value="NZ_AOLY01000022.1"/>
</dbReference>
<dbReference type="SMR" id="Q9C4B4"/>
<dbReference type="STRING" id="1227453.C444_08390"/>
<dbReference type="GlyCosmos" id="Q9C4B4">
    <property type="glycosylation" value="5 sites, No reported glycans"/>
</dbReference>
<dbReference type="PATRIC" id="fig|1227453.3.peg.1659"/>
<dbReference type="eggNOG" id="arCOG03906">
    <property type="taxonomic scope" value="Archaea"/>
</dbReference>
<dbReference type="OrthoDB" id="242828at2157"/>
<dbReference type="Proteomes" id="UP000011524">
    <property type="component" value="Unassembled WGS sequence"/>
</dbReference>
<dbReference type="GO" id="GO:0005576">
    <property type="term" value="C:extracellular region"/>
    <property type="evidence" value="ECO:0007669"/>
    <property type="project" value="UniProtKB-KW"/>
</dbReference>
<dbReference type="GO" id="GO:0005886">
    <property type="term" value="C:plasma membrane"/>
    <property type="evidence" value="ECO:0007669"/>
    <property type="project" value="UniProtKB-SubCell"/>
</dbReference>
<dbReference type="GO" id="GO:0030115">
    <property type="term" value="C:S-layer"/>
    <property type="evidence" value="ECO:0000303"/>
    <property type="project" value="UniProtKB"/>
</dbReference>
<dbReference type="GO" id="GO:0071555">
    <property type="term" value="P:cell wall organization"/>
    <property type="evidence" value="ECO:0007669"/>
    <property type="project" value="UniProtKB-KW"/>
</dbReference>
<dbReference type="GO" id="GO:0008360">
    <property type="term" value="P:regulation of cell shape"/>
    <property type="evidence" value="ECO:0000303"/>
    <property type="project" value="UniProtKB"/>
</dbReference>
<dbReference type="InterPro" id="IPR026458">
    <property type="entry name" value="Csg_halobact"/>
</dbReference>
<dbReference type="InterPro" id="IPR026371">
    <property type="entry name" value="PGF_CTERM"/>
</dbReference>
<dbReference type="InterPro" id="IPR026452">
    <property type="entry name" value="Surf_glycop_sig_pep"/>
</dbReference>
<dbReference type="NCBIfam" id="TIGR04207">
    <property type="entry name" value="halo_sig_pep"/>
    <property type="match status" value="1"/>
</dbReference>
<dbReference type="NCBIfam" id="TIGR04216">
    <property type="entry name" value="halo_surf_glyco"/>
    <property type="match status" value="1"/>
</dbReference>
<dbReference type="NCBIfam" id="TIGR04126">
    <property type="entry name" value="PGF_CTERM"/>
    <property type="match status" value="1"/>
</dbReference>
<dbReference type="Pfam" id="PF18204">
    <property type="entry name" value="PGF-CTERM"/>
    <property type="match status" value="1"/>
</dbReference>
<keyword id="KW-1003">Cell membrane</keyword>
<keyword id="KW-0134">Cell wall</keyword>
<keyword id="KW-0961">Cell wall biogenesis/degradation</keyword>
<keyword id="KW-0903">Direct protein sequencing</keyword>
<keyword id="KW-0325">Glycoprotein</keyword>
<keyword id="KW-0449">Lipoprotein</keyword>
<keyword id="KW-0472">Membrane</keyword>
<keyword id="KW-0701">S-layer</keyword>
<keyword id="KW-0964">Secreted</keyword>
<keyword id="KW-0732">Signal</keyword>
<keyword id="KW-0812">Transmembrane</keyword>
<keyword id="KW-1133">Transmembrane helix</keyword>
<evidence type="ECO:0000250" key="1">
    <source>
        <dbReference type="UniProtKB" id="P25062"/>
    </source>
</evidence>
<evidence type="ECO:0000255" key="2"/>
<evidence type="ECO:0000255" key="3">
    <source>
        <dbReference type="PROSITE-ProRule" id="PRU00498"/>
    </source>
</evidence>
<evidence type="ECO:0000256" key="4">
    <source>
        <dbReference type="SAM" id="MobiDB-lite"/>
    </source>
</evidence>
<evidence type="ECO:0000269" key="5">
    <source ref="3"/>
</evidence>
<evidence type="ECO:0000303" key="6">
    <source ref="3"/>
</evidence>
<evidence type="ECO:0000305" key="7"/>
<evidence type="ECO:0000305" key="8">
    <source>
    </source>
</evidence>
<evidence type="ECO:0000305" key="9">
    <source ref="3"/>
</evidence>
<evidence type="ECO:0000312" key="10">
    <source>
        <dbReference type="EMBL" id="EMA31256.1"/>
    </source>
</evidence>
<name>CSG_HALJT</name>
<comment type="function">
    <text evidence="8 9">S-layer protein. The S-layer is a paracrystalline mono-layered assembly of proteins which coat the surface of the cell.</text>
</comment>
<comment type="subcellular location">
    <subcellularLocation>
        <location evidence="8 9">Secreted</location>
        <location evidence="8 9">Cell wall</location>
        <location evidence="8 9">S-layer</location>
    </subcellularLocation>
    <subcellularLocation>
        <location evidence="1">Cell membrane</location>
    </subcellularLocation>
</comment>
<comment type="PTM">
    <text evidence="5">Glycosylated.</text>
</comment>
<comment type="PTM">
    <text evidence="1">Cleaved by the archaeosortase ArtA at the C-terminus, with removal of a short hydrophobic segment.</text>
</comment>
<comment type="PTM">
    <text evidence="1">Lipidation.</text>
</comment>
<comment type="similarity">
    <text evidence="7">Belongs to the halobacterial S-layer protein family.</text>
</comment>
<comment type="sequence caution" evidence="7">
    <conflict type="erroneous initiation">
        <sequence resource="EMBL-CDS" id="EMA31256"/>
    </conflict>
    <text>Truncated N-terminus.</text>
</comment>
<protein>
    <recommendedName>
        <fullName evidence="6">Cell surface glycoprotein</fullName>
    </recommendedName>
    <alternativeName>
        <fullName>S-layer glycoprotein</fullName>
    </alternativeName>
</protein>
<accession>Q9C4B4</accession>
<accession>M0LCE2</accession>